<organism>
    <name type="scientific">Cronobacter sakazakii (strain ATCC BAA-894)</name>
    <name type="common">Enterobacter sakazakii</name>
    <dbReference type="NCBI Taxonomy" id="290339"/>
    <lineage>
        <taxon>Bacteria</taxon>
        <taxon>Pseudomonadati</taxon>
        <taxon>Pseudomonadota</taxon>
        <taxon>Gammaproteobacteria</taxon>
        <taxon>Enterobacterales</taxon>
        <taxon>Enterobacteriaceae</taxon>
        <taxon>Cronobacter</taxon>
    </lineage>
</organism>
<proteinExistence type="inferred from homology"/>
<name>Y2800_CROS8</name>
<evidence type="ECO:0000255" key="1">
    <source>
        <dbReference type="HAMAP-Rule" id="MF_00274"/>
    </source>
</evidence>
<evidence type="ECO:0000256" key="2">
    <source>
        <dbReference type="SAM" id="MobiDB-lite"/>
    </source>
</evidence>
<accession>A7MJX1</accession>
<protein>
    <recommendedName>
        <fullName evidence="1">Nucleoid-associated protein ESA_02800</fullName>
    </recommendedName>
</protein>
<reference key="1">
    <citation type="journal article" date="2010" name="PLoS ONE">
        <title>Genome sequence of Cronobacter sakazakii BAA-894 and comparative genomic hybridization analysis with other Cronobacter species.</title>
        <authorList>
            <person name="Kucerova E."/>
            <person name="Clifton S.W."/>
            <person name="Xia X.Q."/>
            <person name="Long F."/>
            <person name="Porwollik S."/>
            <person name="Fulton L."/>
            <person name="Fronick C."/>
            <person name="Minx P."/>
            <person name="Kyung K."/>
            <person name="Warren W."/>
            <person name="Fulton R."/>
            <person name="Feng D."/>
            <person name="Wollam A."/>
            <person name="Shah N."/>
            <person name="Bhonagiri V."/>
            <person name="Nash W.E."/>
            <person name="Hallsworth-Pepin K."/>
            <person name="Wilson R.K."/>
            <person name="McClelland M."/>
            <person name="Forsythe S.J."/>
        </authorList>
    </citation>
    <scope>NUCLEOTIDE SEQUENCE [LARGE SCALE GENOMIC DNA]</scope>
    <source>
        <strain>ATCC BAA-894</strain>
    </source>
</reference>
<keyword id="KW-0963">Cytoplasm</keyword>
<keyword id="KW-0238">DNA-binding</keyword>
<keyword id="KW-1185">Reference proteome</keyword>
<sequence length="110" mass="12072">MFGGKGGLGNLMKQAQQMQEKMQKMQEEIAQLEVTGESGAGLVKVTINGAHNCRRVEIDPSLLEDDKEMLEDLVAAAFNDAARRIEETQKEKMASVSSGMQLPPGFKMPF</sequence>
<dbReference type="EMBL" id="CP000783">
    <property type="protein sequence ID" value="ABU78030.1"/>
    <property type="molecule type" value="Genomic_DNA"/>
</dbReference>
<dbReference type="RefSeq" id="WP_004386900.1">
    <property type="nucleotide sequence ID" value="NC_009778.1"/>
</dbReference>
<dbReference type="SMR" id="A7MJX1"/>
<dbReference type="KEGG" id="esa:ESA_02800"/>
<dbReference type="HOGENOM" id="CLU_140930_0_0_6"/>
<dbReference type="Proteomes" id="UP000000260">
    <property type="component" value="Chromosome"/>
</dbReference>
<dbReference type="GO" id="GO:0043590">
    <property type="term" value="C:bacterial nucleoid"/>
    <property type="evidence" value="ECO:0007669"/>
    <property type="project" value="UniProtKB-UniRule"/>
</dbReference>
<dbReference type="GO" id="GO:0005829">
    <property type="term" value="C:cytosol"/>
    <property type="evidence" value="ECO:0007669"/>
    <property type="project" value="TreeGrafter"/>
</dbReference>
<dbReference type="GO" id="GO:0003677">
    <property type="term" value="F:DNA binding"/>
    <property type="evidence" value="ECO:0007669"/>
    <property type="project" value="UniProtKB-UniRule"/>
</dbReference>
<dbReference type="FunFam" id="3.30.1310.10:FF:000001">
    <property type="entry name" value="Nucleoid-associated protein YbaB"/>
    <property type="match status" value="1"/>
</dbReference>
<dbReference type="Gene3D" id="3.30.1310.10">
    <property type="entry name" value="Nucleoid-associated protein YbaB-like domain"/>
    <property type="match status" value="1"/>
</dbReference>
<dbReference type="HAMAP" id="MF_00274">
    <property type="entry name" value="DNA_YbaB_EbfC"/>
    <property type="match status" value="1"/>
</dbReference>
<dbReference type="InterPro" id="IPR036894">
    <property type="entry name" value="YbaB-like_sf"/>
</dbReference>
<dbReference type="InterPro" id="IPR004401">
    <property type="entry name" value="YbaB/EbfC"/>
</dbReference>
<dbReference type="NCBIfam" id="TIGR00103">
    <property type="entry name" value="DNA_YbaB_EbfC"/>
    <property type="match status" value="1"/>
</dbReference>
<dbReference type="PANTHER" id="PTHR33449">
    <property type="entry name" value="NUCLEOID-ASSOCIATED PROTEIN YBAB"/>
    <property type="match status" value="1"/>
</dbReference>
<dbReference type="PANTHER" id="PTHR33449:SF1">
    <property type="entry name" value="NUCLEOID-ASSOCIATED PROTEIN YBAB"/>
    <property type="match status" value="1"/>
</dbReference>
<dbReference type="Pfam" id="PF02575">
    <property type="entry name" value="YbaB_DNA_bd"/>
    <property type="match status" value="1"/>
</dbReference>
<dbReference type="PIRSF" id="PIRSF004555">
    <property type="entry name" value="UCP004555"/>
    <property type="match status" value="1"/>
</dbReference>
<dbReference type="SUPFAM" id="SSF82607">
    <property type="entry name" value="YbaB-like"/>
    <property type="match status" value="1"/>
</dbReference>
<comment type="function">
    <text evidence="1">Binds to DNA and alters its conformation. May be involved in regulation of gene expression, nucleoid organization and DNA protection.</text>
</comment>
<comment type="subunit">
    <text evidence="1">Homodimer.</text>
</comment>
<comment type="subcellular location">
    <subcellularLocation>
        <location evidence="1">Cytoplasm</location>
        <location evidence="1">Nucleoid</location>
    </subcellularLocation>
</comment>
<comment type="similarity">
    <text evidence="1">Belongs to the YbaB/EbfC family.</text>
</comment>
<gene>
    <name type="ordered locus">ESA_02800</name>
</gene>
<feature type="chain" id="PRO_1000003740" description="Nucleoid-associated protein ESA_02800">
    <location>
        <begin position="1"/>
        <end position="110"/>
    </location>
</feature>
<feature type="region of interest" description="Disordered" evidence="2">
    <location>
        <begin position="89"/>
        <end position="110"/>
    </location>
</feature>